<keyword id="KW-0238">DNA-binding</keyword>
<keyword id="KW-0287">Flowering</keyword>
<keyword id="KW-0539">Nucleus</keyword>
<keyword id="KW-0597">Phosphoprotein</keyword>
<keyword id="KW-1185">Reference proteome</keyword>
<keyword id="KW-0804">Transcription</keyword>
<keyword id="KW-0805">Transcription regulation</keyword>
<evidence type="ECO:0000255" key="1"/>
<evidence type="ECO:0000255" key="2">
    <source>
        <dbReference type="PROSITE-ProRule" id="PRU00357"/>
    </source>
</evidence>
<evidence type="ECO:0000256" key="3">
    <source>
        <dbReference type="SAM" id="MobiDB-lite"/>
    </source>
</evidence>
<evidence type="ECO:0000269" key="4">
    <source>
    </source>
</evidence>
<evidence type="ECO:0000269" key="5">
    <source>
    </source>
</evidence>
<evidence type="ECO:0000305" key="6"/>
<evidence type="ECO:0000305" key="7">
    <source>
    </source>
</evidence>
<evidence type="ECO:0000312" key="8">
    <source>
        <dbReference type="EMBL" id="BAC07164.1"/>
    </source>
</evidence>
<evidence type="ECO:0000312" key="9">
    <source>
        <dbReference type="EMBL" id="BAJ53926.1"/>
    </source>
</evidence>
<evidence type="ECO:0000312" key="10">
    <source>
        <dbReference type="EMBL" id="BAT00895.1"/>
    </source>
</evidence>
<name>GHD7_ORYSJ</name>
<dbReference type="EMBL" id="AB564472">
    <property type="protein sequence ID" value="BAJ53926.1"/>
    <property type="molecule type" value="Genomic_DNA"/>
</dbReference>
<dbReference type="EMBL" id="AB564474">
    <property type="protein sequence ID" value="BAJ53928.1"/>
    <property type="molecule type" value="Genomic_DNA"/>
</dbReference>
<dbReference type="EMBL" id="JF926532">
    <property type="protein sequence ID" value="AEG78653.1"/>
    <property type="molecule type" value="Genomic_DNA"/>
</dbReference>
<dbReference type="EMBL" id="AP005307">
    <property type="protein sequence ID" value="BAC07164.1"/>
    <property type="status" value="ALT_SEQ"/>
    <property type="molecule type" value="Genomic_DNA"/>
</dbReference>
<dbReference type="EMBL" id="AP014963">
    <property type="protein sequence ID" value="BAT00895.1"/>
    <property type="molecule type" value="Genomic_DNA"/>
</dbReference>
<dbReference type="SMR" id="E5RQA1"/>
<dbReference type="FunCoup" id="E5RQA1">
    <property type="interactions" value="3"/>
</dbReference>
<dbReference type="STRING" id="39947.E5RQA1"/>
<dbReference type="iPTMnet" id="E5RQA1"/>
<dbReference type="PaxDb" id="39947-E5RQA1"/>
<dbReference type="EnsemblPlants" id="Os07t0261200-01">
    <property type="protein sequence ID" value="Os07t0261200-01"/>
    <property type="gene ID" value="Os07g0261200"/>
</dbReference>
<dbReference type="GeneID" id="107276161"/>
<dbReference type="Gramene" id="Os07t0261200-01">
    <property type="protein sequence ID" value="Os07t0261200-01"/>
    <property type="gene ID" value="Os07g0261200"/>
</dbReference>
<dbReference type="KEGG" id="osa:107276161"/>
<dbReference type="eggNOG" id="KOG1601">
    <property type="taxonomic scope" value="Eukaryota"/>
</dbReference>
<dbReference type="HOGENOM" id="CLU_078080_0_0_1"/>
<dbReference type="InParanoid" id="E5RQA1"/>
<dbReference type="OMA" id="PPVHEFQ"/>
<dbReference type="OrthoDB" id="153872at2759"/>
<dbReference type="PlantReactome" id="R-OSA-8934036">
    <property type="pathway name" value="Long day regulated expression of florigens"/>
</dbReference>
<dbReference type="Proteomes" id="UP000000763">
    <property type="component" value="Chromosome 7"/>
</dbReference>
<dbReference type="Proteomes" id="UP000059680">
    <property type="component" value="Chromosome 7"/>
</dbReference>
<dbReference type="GO" id="GO:0005634">
    <property type="term" value="C:nucleus"/>
    <property type="evidence" value="ECO:0000314"/>
    <property type="project" value="UniProtKB"/>
</dbReference>
<dbReference type="GO" id="GO:0003677">
    <property type="term" value="F:DNA binding"/>
    <property type="evidence" value="ECO:0007669"/>
    <property type="project" value="UniProtKB-KW"/>
</dbReference>
<dbReference type="GO" id="GO:0009908">
    <property type="term" value="P:flower development"/>
    <property type="evidence" value="ECO:0007669"/>
    <property type="project" value="UniProtKB-KW"/>
</dbReference>
<dbReference type="GO" id="GO:0048579">
    <property type="term" value="P:negative regulation of long-day photoperiodism, flowering"/>
    <property type="evidence" value="ECO:0000315"/>
    <property type="project" value="UniProtKB"/>
</dbReference>
<dbReference type="GO" id="GO:0009909">
    <property type="term" value="P:regulation of flower development"/>
    <property type="evidence" value="ECO:0000318"/>
    <property type="project" value="GO_Central"/>
</dbReference>
<dbReference type="InterPro" id="IPR010402">
    <property type="entry name" value="CCT_domain"/>
</dbReference>
<dbReference type="InterPro" id="IPR045281">
    <property type="entry name" value="CONSTANS-like"/>
</dbReference>
<dbReference type="PANTHER" id="PTHR31319:SF98">
    <property type="entry name" value="TRANSCRIPTION FACTOR GHD7"/>
    <property type="match status" value="1"/>
</dbReference>
<dbReference type="PANTHER" id="PTHR31319">
    <property type="entry name" value="ZINC FINGER PROTEIN CONSTANS-LIKE 4"/>
    <property type="match status" value="1"/>
</dbReference>
<dbReference type="Pfam" id="PF06203">
    <property type="entry name" value="CCT"/>
    <property type="match status" value="1"/>
</dbReference>
<dbReference type="PROSITE" id="PS51017">
    <property type="entry name" value="CCT"/>
    <property type="match status" value="1"/>
</dbReference>
<proteinExistence type="evidence at protein level"/>
<sequence length="257" mass="27308">MSMGPAAGEGCGLCGADGGGCCSRHRHDDDGFPFVFPPSACQGIGAPAPPVHEFQFFGNDGGGDDGESVAWLFDDYPPPSPVAAAAGMHHRQPPYDGVVAPPSLFRRNTGAGGLTFDVSLGERPDLDAGLGLGGGGGRHAEAAASATIMSYCGSTFTDAASSMPKEMVAAMADDGESLNPNTVVGAMVEREAKLMRYKEKRKKRCYEKQIRYASRKAYAEMRPRVRGRFAKEPDQEAVAPPSTYVDPSRLELGQWFR</sequence>
<protein>
    <recommendedName>
        <fullName evidence="6">Transcription factor GHD7</fullName>
    </recommendedName>
    <alternativeName>
        <fullName evidence="6">Protein GRAIN NUMBER PLANT HEIGHT AND HEADING DATE 7</fullName>
    </alternativeName>
</protein>
<reference key="1">
    <citation type="journal article" date="2011" name="Theor. Appl. Genet.">
        <title>Uncovering of major genetic factors generating naturally occurring variation in heading date among Asian rice cultivars.</title>
        <authorList>
            <person name="Ebana K."/>
            <person name="Shibaya T."/>
            <person name="Wu J."/>
            <person name="Matsubara K."/>
            <person name="Kanamori H."/>
            <person name="Yamane H."/>
            <person name="Yamanouchi U."/>
            <person name="Mizubayashi T."/>
            <person name="Kono I."/>
            <person name="Shomura A."/>
            <person name="Ito S."/>
            <person name="Ando T."/>
            <person name="Hori K."/>
            <person name="Matsumoto T."/>
            <person name="Yano M."/>
        </authorList>
    </citation>
    <scope>NUCLEOTIDE SEQUENCE [GENOMIC DNA]</scope>
    <source>
        <strain>cv. Khao Nam Jen</strain>
        <strain>cv. Khau Mac Kho</strain>
    </source>
</reference>
<reference key="2">
    <citation type="journal article" date="2012" name="PLoS ONE">
        <title>Evolution and association analysis of ghd7 in rice.</title>
        <authorList>
            <person name="Lu L."/>
            <person name="Yan W."/>
            <person name="Xue W."/>
            <person name="Shao D."/>
            <person name="Xing Y."/>
        </authorList>
    </citation>
    <scope>NUCLEOTIDE SEQUENCE [GENOMIC DNA]</scope>
</reference>
<reference key="3">
    <citation type="journal article" date="2005" name="Nature">
        <title>The map-based sequence of the rice genome.</title>
        <authorList>
            <consortium name="International rice genome sequencing project (IRGSP)"/>
        </authorList>
    </citation>
    <scope>NUCLEOTIDE SEQUENCE [LARGE SCALE GENOMIC DNA]</scope>
    <source>
        <strain>cv. Nipponbare</strain>
    </source>
</reference>
<reference key="4">
    <citation type="journal article" date="2008" name="Nucleic Acids Res.">
        <title>The rice annotation project database (RAP-DB): 2008 update.</title>
        <authorList>
            <consortium name="The rice annotation project (RAP)"/>
        </authorList>
    </citation>
    <scope>GENOME REANNOTATION</scope>
    <source>
        <strain>cv. Nipponbare</strain>
    </source>
</reference>
<reference key="5">
    <citation type="journal article" date="2013" name="Rice">
        <title>Improvement of the Oryza sativa Nipponbare reference genome using next generation sequence and optical map data.</title>
        <authorList>
            <person name="Kawahara Y."/>
            <person name="de la Bastide M."/>
            <person name="Hamilton J.P."/>
            <person name="Kanamori H."/>
            <person name="McCombie W.R."/>
            <person name="Ouyang S."/>
            <person name="Schwartz D.C."/>
            <person name="Tanaka T."/>
            <person name="Wu J."/>
            <person name="Zhou S."/>
            <person name="Childs K.L."/>
            <person name="Davidson R.M."/>
            <person name="Lin H."/>
            <person name="Quesada-Ocampo L."/>
            <person name="Vaillancourt B."/>
            <person name="Sakai H."/>
            <person name="Lee S.S."/>
            <person name="Kim J."/>
            <person name="Numa H."/>
            <person name="Itoh T."/>
            <person name="Buell C.R."/>
            <person name="Matsumoto T."/>
        </authorList>
    </citation>
    <scope>GENOME REANNOTATION</scope>
    <source>
        <strain>cv. Nipponbare</strain>
    </source>
</reference>
<reference key="6">
    <citation type="journal article" date="2008" name="Nat. Genet.">
        <title>Natural variation in Ghd7 is an important regulator of heading date and yield potential in rice.</title>
        <authorList>
            <person name="Xue W."/>
            <person name="Xing Y."/>
            <person name="Weng X."/>
            <person name="Zhao Y."/>
            <person name="Tang W."/>
            <person name="Wang L."/>
            <person name="Zhou H."/>
            <person name="Yu S."/>
            <person name="Xu C."/>
            <person name="Li X."/>
            <person name="Zhang Q."/>
        </authorList>
    </citation>
    <scope>FUNCTION</scope>
    <scope>SUBCELLULAR LOCATION</scope>
    <scope>TISSUE SPECIFICITY</scope>
    <scope>INDUCTION</scope>
    <scope>DISRUPTION PHENOTYPE</scope>
</reference>
<reference key="7">
    <citation type="journal article" date="2013" name="Plant J.">
        <title>Hd16, a gene for casein kinase I, is involved in the control of rice flowering time by modulating the day-length response.</title>
        <authorList>
            <person name="Hori K."/>
            <person name="Ogiso-Tanaka E."/>
            <person name="Matsubara K."/>
            <person name="Yamanouchi U."/>
            <person name="Ebana K."/>
            <person name="Yano M."/>
        </authorList>
    </citation>
    <scope>FUNCTION</scope>
    <scope>INTERACTION WITH HD16/EL1</scope>
    <scope>PHOSPHORYLATION AT SER-68</scope>
    <source>
        <strain>cv. Koshihikari</strain>
        <strain>cv. Nipponbare</strain>
    </source>
</reference>
<gene>
    <name evidence="9" type="primary">GHD7</name>
    <name evidence="10" type="ordered locus">Os07g0261200</name>
    <name evidence="6" type="ordered locus">LOC_Os07g15770</name>
    <name evidence="8" type="ORF">P0046D03.119</name>
</gene>
<accession>E5RQA1</accession>
<accession>Q8LGV7</accession>
<comment type="function">
    <text evidence="4 5">Probable transcription factor involved in the regulation of flowering time under long day (LD) conditions. Plays a major role as repressor of flowering. Controls flowering time by negatively regulating the expression of EHD1 and HD3A.</text>
</comment>
<comment type="subunit">
    <text evidence="5">Interacts with HD16/EL1.</text>
</comment>
<comment type="subcellular location">
    <subcellularLocation>
        <location evidence="4">Nucleus</location>
    </subcellularLocation>
</comment>
<comment type="tissue specificity">
    <text evidence="4">Expressed in the apical meristem, developing leaves, leaf sheaths of young seedling, root meristem, epidermal layer of developing stems and branch-primordia of developing panicles.</text>
</comment>
<comment type="induction">
    <text evidence="4">Circadian-regulation under long day (LD) conditions. Expression increases during daytime, peaks at the end of the light period and gradually decreases during the dark period.</text>
</comment>
<comment type="PTM">
    <text evidence="7">Phosphorylated at Ser-68 by HD16/EL1, a casein kinase 1.</text>
</comment>
<comment type="disruption phenotype">
    <text evidence="4">Early flowering phenotype under long day (LD) and natural day (ND) conditions. Decreased plant size, number of grains per panicle, yield and dry weight per plant.</text>
</comment>
<comment type="sequence caution" evidence="6">
    <conflict type="erroneous gene model prediction">
        <sequence resource="EMBL-CDS" id="BAC07164"/>
    </conflict>
</comment>
<feature type="chain" id="PRO_0000437430" description="Transcription factor GHD7">
    <location>
        <begin position="1"/>
        <end position="257"/>
    </location>
</feature>
<feature type="domain" description="CCT" evidence="2">
    <location>
        <begin position="190"/>
        <end position="232"/>
    </location>
</feature>
<feature type="region of interest" description="Disordered" evidence="3">
    <location>
        <begin position="226"/>
        <end position="245"/>
    </location>
</feature>
<feature type="short sequence motif" description="Nuclear localization signal" evidence="1">
    <location>
        <begin position="198"/>
        <end position="204"/>
    </location>
</feature>
<feature type="modified residue" description="Phosphoserine; by CK1" evidence="7">
    <location>
        <position position="68"/>
    </location>
</feature>
<organism>
    <name type="scientific">Oryza sativa subsp. japonica</name>
    <name type="common">Rice</name>
    <dbReference type="NCBI Taxonomy" id="39947"/>
    <lineage>
        <taxon>Eukaryota</taxon>
        <taxon>Viridiplantae</taxon>
        <taxon>Streptophyta</taxon>
        <taxon>Embryophyta</taxon>
        <taxon>Tracheophyta</taxon>
        <taxon>Spermatophyta</taxon>
        <taxon>Magnoliopsida</taxon>
        <taxon>Liliopsida</taxon>
        <taxon>Poales</taxon>
        <taxon>Poaceae</taxon>
        <taxon>BOP clade</taxon>
        <taxon>Oryzoideae</taxon>
        <taxon>Oryzeae</taxon>
        <taxon>Oryzinae</taxon>
        <taxon>Oryza</taxon>
        <taxon>Oryza sativa</taxon>
    </lineage>
</organism>